<proteinExistence type="inferred from homology"/>
<feature type="chain" id="PRO_0000200595" description="Trithorax group protein osa">
    <location>
        <begin position="1" status="less than"/>
        <end position="324" status="greater than"/>
    </location>
</feature>
<feature type="domain" description="EHD">
    <location>
        <begin position="1" status="less than"/>
        <end position="126"/>
    </location>
</feature>
<feature type="region of interest" description="Disordered" evidence="2">
    <location>
        <begin position="132"/>
        <end position="226"/>
    </location>
</feature>
<feature type="region of interest" description="Disordered" evidence="2">
    <location>
        <begin position="287"/>
        <end position="324"/>
    </location>
</feature>
<feature type="compositionally biased region" description="Low complexity" evidence="2">
    <location>
        <begin position="154"/>
        <end position="175"/>
    </location>
</feature>
<feature type="compositionally biased region" description="Polar residues" evidence="2">
    <location>
        <begin position="179"/>
        <end position="188"/>
    </location>
</feature>
<feature type="compositionally biased region" description="Low complexity" evidence="2">
    <location>
        <begin position="195"/>
        <end position="226"/>
    </location>
</feature>
<feature type="compositionally biased region" description="Low complexity" evidence="2">
    <location>
        <begin position="287"/>
        <end position="310"/>
    </location>
</feature>
<feature type="non-terminal residue">
    <location>
        <position position="1"/>
    </location>
</feature>
<feature type="non-terminal residue">
    <location>
        <position position="324"/>
    </location>
</feature>
<reference key="1">
    <citation type="journal article" date="2000" name="Proc. Natl. Acad. Sci. U.S.A.">
        <title>Reduced X-linked nucleotide polymorphism in Drosophila simulans.</title>
        <authorList>
            <person name="Begun D.J."/>
            <person name="Whitley P."/>
        </authorList>
    </citation>
    <scope>NUCLEOTIDE SEQUENCE [GENOMIC DNA]</scope>
</reference>
<gene>
    <name type="primary">osa</name>
    <name type="synonym">eld</name>
</gene>
<comment type="function">
    <text evidence="1">Trithorax group (trxG) protein required for embryonic segmentation, development of the notum and wing margin, and photoreceptor differentiation. Required for the activation of genes such as Antp, Ubx and Eve. Binds to DNA without specific affinity, suggesting that it is recruited to promoters by promoter-specific proteins. Essential component of the Brahma complex, a multiprotein complex which is the equivalent of the yeast SWI/SNF complex and acts by remodeling the chromatin by catalyzing an ATP-dependent alteration in the structure of nucleosomal DNA. This complex can both serve as a transcriptional coactivator or corepressor, depending on the context. Acts as an essential coactivator for Zeste, which recruits the whole complex to specific genes. In contrast, it acts as a corepressor for Wg target genes, possibly via an interaction with Pan and Gro. It also acts as a negative regulator for proneural achaete-scute, when it is directly recruited by Pan and Chi. Also represses E2f activation (By similarity).</text>
</comment>
<comment type="subunit">
    <text evidence="1">Component of the Brahma complex, which is composed of Brm, Osa, Mor, Snr1/Bap45, Bap111/Dalao, Bap55, Bap60 and Bap47. Interacts with Pnr and Chi via its EHD domain (By similarity).</text>
</comment>
<comment type="subcellular location">
    <subcellularLocation>
        <location evidence="1">Nucleus</location>
    </subcellularLocation>
</comment>
<sequence>YLAAADSAMARTVALQSPCISYLVAFIEQAEQTALGVANQHGINYLRENPDSMGTSLDMLRRAAGTLLHLAKHPDNRSLFMQQEQRLLGLVMSHILDQQVALIISRVLYQVSRGTGPIHSVEFRLLQQRQQQQLRPASAEKQAASAGGSAPVKAEAASTETSSTEAKPAPAATTAVVNDENSNSSQQLPPAATFNDVSNSSTNSNSCGTVSSNQTNXXXXNSSHSSSAISSQSAITVTAPSAPATGATSAXXXAITSDQQQVSKVAAAAAAAAALSNASAAAAAAAAAAAASVGPPTSSSVSAGAAVAQPAAPPPTNAGTTTAV</sequence>
<evidence type="ECO:0000250" key="1"/>
<evidence type="ECO:0000256" key="2">
    <source>
        <dbReference type="SAM" id="MobiDB-lite"/>
    </source>
</evidence>
<dbReference type="EMBL" id="AF255314">
    <property type="protein sequence ID" value="AAF68611.1"/>
    <property type="molecule type" value="Genomic_DNA"/>
</dbReference>
<dbReference type="EnsemblMetazoa" id="FBtr0401414">
    <property type="protein sequence ID" value="FBpp0360329"/>
    <property type="gene ID" value="FBgn0041640"/>
</dbReference>
<dbReference type="EnsemblMetazoa" id="XM_039375541.2">
    <property type="protein sequence ID" value="XP_039231475.1"/>
    <property type="gene ID" value="LOC6535474"/>
</dbReference>
<dbReference type="eggNOG" id="KOG2510">
    <property type="taxonomic scope" value="Eukaryota"/>
</dbReference>
<dbReference type="OrthoDB" id="8709537at2759"/>
<dbReference type="ChiTaRS" id="osa">
    <property type="organism name" value="fly"/>
</dbReference>
<dbReference type="GO" id="GO:0035060">
    <property type="term" value="C:brahma complex"/>
    <property type="evidence" value="ECO:0007669"/>
    <property type="project" value="InterPro"/>
</dbReference>
<dbReference type="GO" id="GO:0071565">
    <property type="term" value="C:nBAF complex"/>
    <property type="evidence" value="ECO:0007669"/>
    <property type="project" value="TreeGrafter"/>
</dbReference>
<dbReference type="GO" id="GO:0005654">
    <property type="term" value="C:nucleoplasm"/>
    <property type="evidence" value="ECO:0007669"/>
    <property type="project" value="TreeGrafter"/>
</dbReference>
<dbReference type="GO" id="GO:0005634">
    <property type="term" value="C:nucleus"/>
    <property type="evidence" value="ECO:0000250"/>
    <property type="project" value="UniProtKB"/>
</dbReference>
<dbReference type="GO" id="GO:0016514">
    <property type="term" value="C:SWI/SNF complex"/>
    <property type="evidence" value="ECO:0007669"/>
    <property type="project" value="InterPro"/>
</dbReference>
<dbReference type="GO" id="GO:0003677">
    <property type="term" value="F:DNA binding"/>
    <property type="evidence" value="ECO:0000250"/>
    <property type="project" value="UniProtKB"/>
</dbReference>
<dbReference type="GO" id="GO:0031491">
    <property type="term" value="F:nucleosome binding"/>
    <property type="evidence" value="ECO:0007669"/>
    <property type="project" value="TreeGrafter"/>
</dbReference>
<dbReference type="GO" id="GO:0006338">
    <property type="term" value="P:chromatin remodeling"/>
    <property type="evidence" value="ECO:0007669"/>
    <property type="project" value="InterPro"/>
</dbReference>
<dbReference type="GO" id="GO:0008587">
    <property type="term" value="P:imaginal disc-derived wing margin morphogenesis"/>
    <property type="evidence" value="ECO:0000250"/>
    <property type="project" value="UniProtKB"/>
</dbReference>
<dbReference type="GO" id="GO:0046530">
    <property type="term" value="P:photoreceptor cell differentiation"/>
    <property type="evidence" value="ECO:0000250"/>
    <property type="project" value="UniProtKB"/>
</dbReference>
<dbReference type="GO" id="GO:0045893">
    <property type="term" value="P:positive regulation of DNA-templated transcription"/>
    <property type="evidence" value="ECO:0007669"/>
    <property type="project" value="TreeGrafter"/>
</dbReference>
<dbReference type="GO" id="GO:0006355">
    <property type="term" value="P:regulation of DNA-templated transcription"/>
    <property type="evidence" value="ECO:0000250"/>
    <property type="project" value="UniProtKB"/>
</dbReference>
<dbReference type="GO" id="GO:0006357">
    <property type="term" value="P:regulation of transcription by RNA polymerase II"/>
    <property type="evidence" value="ECO:0007669"/>
    <property type="project" value="TreeGrafter"/>
</dbReference>
<dbReference type="GO" id="GO:0007379">
    <property type="term" value="P:segment specification"/>
    <property type="evidence" value="ECO:0000250"/>
    <property type="project" value="UniProtKB"/>
</dbReference>
<dbReference type="GO" id="GO:0016055">
    <property type="term" value="P:Wnt signaling pathway"/>
    <property type="evidence" value="ECO:0000250"/>
    <property type="project" value="UniProtKB"/>
</dbReference>
<dbReference type="InterPro" id="IPR021906">
    <property type="entry name" value="BAF250/Osa"/>
</dbReference>
<dbReference type="InterPro" id="IPR033388">
    <property type="entry name" value="BAF250_C"/>
</dbReference>
<dbReference type="PANTHER" id="PTHR12656">
    <property type="entry name" value="BRG-1 ASSOCIATED FACTOR 250 BAF250"/>
    <property type="match status" value="1"/>
</dbReference>
<dbReference type="PANTHER" id="PTHR12656:SF5">
    <property type="entry name" value="TRITHORAX GROUP PROTEIN OSA"/>
    <property type="match status" value="1"/>
</dbReference>
<dbReference type="Pfam" id="PF12031">
    <property type="entry name" value="BAF250_C"/>
    <property type="match status" value="1"/>
</dbReference>
<name>OSA_DROYA</name>
<accession>Q9NGB4</accession>
<protein>
    <recommendedName>
        <fullName>Trithorax group protein osa</fullName>
    </recommendedName>
    <alternativeName>
        <fullName>Protein eyelid</fullName>
    </alternativeName>
</protein>
<organism>
    <name type="scientific">Drosophila yakuba</name>
    <name type="common">Fruit fly</name>
    <dbReference type="NCBI Taxonomy" id="7245"/>
    <lineage>
        <taxon>Eukaryota</taxon>
        <taxon>Metazoa</taxon>
        <taxon>Ecdysozoa</taxon>
        <taxon>Arthropoda</taxon>
        <taxon>Hexapoda</taxon>
        <taxon>Insecta</taxon>
        <taxon>Pterygota</taxon>
        <taxon>Neoptera</taxon>
        <taxon>Endopterygota</taxon>
        <taxon>Diptera</taxon>
        <taxon>Brachycera</taxon>
        <taxon>Muscomorpha</taxon>
        <taxon>Ephydroidea</taxon>
        <taxon>Drosophilidae</taxon>
        <taxon>Drosophila</taxon>
        <taxon>Sophophora</taxon>
    </lineage>
</organism>
<keyword id="KW-0010">Activator</keyword>
<keyword id="KW-0156">Chromatin regulator</keyword>
<keyword id="KW-0217">Developmental protein</keyword>
<keyword id="KW-0238">DNA-binding</keyword>
<keyword id="KW-0539">Nucleus</keyword>
<keyword id="KW-0678">Repressor</keyword>
<keyword id="KW-0804">Transcription</keyword>
<keyword id="KW-0805">Transcription regulation</keyword>